<evidence type="ECO:0000250" key="1">
    <source>
        <dbReference type="UniProtKB" id="Q13113"/>
    </source>
</evidence>
<evidence type="ECO:0000250" key="2">
    <source>
        <dbReference type="UniProtKB" id="Q9CQH0"/>
    </source>
</evidence>
<evidence type="ECO:0000305" key="3"/>
<gene>
    <name evidence="1" type="primary">PDZK1IP1</name>
    <name evidence="1" type="synonym">MAP17</name>
</gene>
<protein>
    <recommendedName>
        <fullName>PDZK1-interacting protein 1</fullName>
    </recommendedName>
</protein>
<keyword id="KW-1003">Cell membrane</keyword>
<keyword id="KW-0472">Membrane</keyword>
<keyword id="KW-0597">Phosphoprotein</keyword>
<keyword id="KW-1185">Reference proteome</keyword>
<keyword id="KW-0812">Transmembrane</keyword>
<keyword id="KW-1133">Transmembrane helix</keyword>
<reference key="1">
    <citation type="submission" date="2006-01" db="EMBL/GenBank/DDBJ databases">
        <authorList>
            <consortium name="NIH - Mammalian Gene Collection (MGC) project"/>
        </authorList>
    </citation>
    <scope>NUCLEOTIDE SEQUENCE [LARGE SCALE MRNA]</scope>
    <source>
        <strain>Hereford</strain>
        <tissue>Testis</tissue>
    </source>
</reference>
<comment type="function">
    <text evidence="1">Auxiliary protein of electrogenic Na(+)-coupled sugar symporter SLC5A2/SGLT2 and SLC5A1/SGLT1 (By similarity). Essential for the transporter activity of SLC5A2/SGLT2 but not SLC5A1/SGLT1 (By similarity).</text>
</comment>
<comment type="subunit">
    <text evidence="1">Forms a heterodimer (via N-terminal transmembrane helix) with SLC5A2/SGLT2 (via TM13); this interaction enhances SLC5A2 transporter activity (By similarity). Interacts with PDZK1 (By similarity).</text>
</comment>
<comment type="subcellular location">
    <subcellularLocation>
        <location evidence="1">Apical cell membrane</location>
        <topology evidence="1">Single-pass membrane protein</topology>
    </subcellularLocation>
</comment>
<comment type="similarity">
    <text evidence="3">Belongs to the PDZK1-interacting protein 1/SMIM24 family.</text>
</comment>
<feature type="chain" id="PRO_0000240309" description="PDZK1-interacting protein 1">
    <location>
        <begin position="1"/>
        <end position="114"/>
    </location>
</feature>
<feature type="topological domain" description="Extracellular" evidence="1">
    <location>
        <begin position="1"/>
        <end position="28"/>
    </location>
</feature>
<feature type="transmembrane region" description="Helical" evidence="1">
    <location>
        <begin position="29"/>
        <end position="51"/>
    </location>
</feature>
<feature type="topological domain" description="Cytoplasmic" evidence="1">
    <location>
        <begin position="52"/>
        <end position="114"/>
    </location>
</feature>
<feature type="modified residue" description="Phosphoserine" evidence="2">
    <location>
        <position position="85"/>
    </location>
</feature>
<accession>Q2KIP5</accession>
<proteinExistence type="inferred from homology"/>
<organism>
    <name type="scientific">Bos taurus</name>
    <name type="common">Bovine</name>
    <dbReference type="NCBI Taxonomy" id="9913"/>
    <lineage>
        <taxon>Eukaryota</taxon>
        <taxon>Metazoa</taxon>
        <taxon>Chordata</taxon>
        <taxon>Craniata</taxon>
        <taxon>Vertebrata</taxon>
        <taxon>Euteleostomi</taxon>
        <taxon>Mammalia</taxon>
        <taxon>Eutheria</taxon>
        <taxon>Laurasiatheria</taxon>
        <taxon>Artiodactyla</taxon>
        <taxon>Ruminantia</taxon>
        <taxon>Pecora</taxon>
        <taxon>Bovidae</taxon>
        <taxon>Bovinae</taxon>
        <taxon>Bos</taxon>
    </lineage>
</organism>
<dbReference type="EMBL" id="BC112562">
    <property type="protein sequence ID" value="AAI12563.1"/>
    <property type="molecule type" value="mRNA"/>
</dbReference>
<dbReference type="RefSeq" id="NP_001039986.1">
    <property type="nucleotide sequence ID" value="NM_001046521.2"/>
</dbReference>
<dbReference type="RefSeq" id="XP_005204902.1">
    <property type="nucleotide sequence ID" value="XM_005204845.2"/>
</dbReference>
<dbReference type="SMR" id="Q2KIP5"/>
<dbReference type="FunCoup" id="Q2KIP5">
    <property type="interactions" value="51"/>
</dbReference>
<dbReference type="STRING" id="9913.ENSBTAP00000064101"/>
<dbReference type="PaxDb" id="9913-ENSBTAP00000003309"/>
<dbReference type="GeneID" id="613915"/>
<dbReference type="KEGG" id="bta:613915"/>
<dbReference type="CTD" id="10158"/>
<dbReference type="eggNOG" id="ENOG502SAPW">
    <property type="taxonomic scope" value="Eukaryota"/>
</dbReference>
<dbReference type="HOGENOM" id="CLU_168651_0_0_1"/>
<dbReference type="InParanoid" id="Q2KIP5"/>
<dbReference type="OrthoDB" id="9900654at2759"/>
<dbReference type="TreeFam" id="TF328829"/>
<dbReference type="Proteomes" id="UP000009136">
    <property type="component" value="Unplaced"/>
</dbReference>
<dbReference type="GO" id="GO:0016324">
    <property type="term" value="C:apical plasma membrane"/>
    <property type="evidence" value="ECO:0007669"/>
    <property type="project" value="UniProtKB-SubCell"/>
</dbReference>
<dbReference type="InterPro" id="IPR031627">
    <property type="entry name" value="PDZK1IP1/SMIM24"/>
</dbReference>
<dbReference type="PANTHER" id="PTHR15296">
    <property type="entry name" value="MEMBRANE-ASSOCIATED PROTEIN MAP17"/>
    <property type="match status" value="1"/>
</dbReference>
<dbReference type="PANTHER" id="PTHR15296:SF0">
    <property type="entry name" value="PDZK1-INTERACTING PROTEIN 1"/>
    <property type="match status" value="1"/>
</dbReference>
<dbReference type="Pfam" id="PF15807">
    <property type="entry name" value="MAP17"/>
    <property type="match status" value="1"/>
</dbReference>
<sequence length="114" mass="12269">MSVLSLVVLSLLMALPPASCQQGRGNLQPWMQGLIAVAVFLVLVAIAFAVNHFWCQEKPAPINMVMTIGNKADGILVGTDGKYSSMAASFRSSEHENAYENIPEEEGKVCSTPM</sequence>
<name>PDZ1I_BOVIN</name>